<evidence type="ECO:0000255" key="1">
    <source>
        <dbReference type="HAMAP-Rule" id="MF_01903"/>
    </source>
</evidence>
<gene>
    <name evidence="1" type="primary">gpt</name>
    <name type="ordered locus">SCH_0318</name>
</gene>
<reference key="1">
    <citation type="journal article" date="2005" name="Nucleic Acids Res.">
        <title>The genome sequence of Salmonella enterica serovar Choleraesuis, a highly invasive and resistant zoonotic pathogen.</title>
        <authorList>
            <person name="Chiu C.-H."/>
            <person name="Tang P."/>
            <person name="Chu C."/>
            <person name="Hu S."/>
            <person name="Bao Q."/>
            <person name="Yu J."/>
            <person name="Chou Y.-Y."/>
            <person name="Wang H.-S."/>
            <person name="Lee Y.-S."/>
        </authorList>
    </citation>
    <scope>NUCLEOTIDE SEQUENCE [LARGE SCALE GENOMIC DNA]</scope>
    <source>
        <strain>SC-B67</strain>
    </source>
</reference>
<comment type="function">
    <text evidence="1">Purine salvage pathway enzyme that catalyzes the transfer of the ribosyl-5-phosphate group from 5-phospho-alpha-D-ribose 1-diphosphate (PRPP) to the N9 position of the 6-oxopurines guanine and xanthine to form the corresponding ribonucleotides GMP (guanosine 5'-monophosphate) and XMP (xanthosine 5'-monophosphate), with the release of PPi. To a lesser extent, also acts on hypoxanthine.</text>
</comment>
<comment type="catalytic activity">
    <reaction evidence="1">
        <text>GMP + diphosphate = guanine + 5-phospho-alpha-D-ribose 1-diphosphate</text>
        <dbReference type="Rhea" id="RHEA:25424"/>
        <dbReference type="ChEBI" id="CHEBI:16235"/>
        <dbReference type="ChEBI" id="CHEBI:33019"/>
        <dbReference type="ChEBI" id="CHEBI:58017"/>
        <dbReference type="ChEBI" id="CHEBI:58115"/>
    </reaction>
    <physiologicalReaction direction="right-to-left" evidence="1">
        <dbReference type="Rhea" id="RHEA:25426"/>
    </physiologicalReaction>
</comment>
<comment type="catalytic activity">
    <reaction evidence="1">
        <text>XMP + diphosphate = xanthine + 5-phospho-alpha-D-ribose 1-diphosphate</text>
        <dbReference type="Rhea" id="RHEA:10800"/>
        <dbReference type="ChEBI" id="CHEBI:17712"/>
        <dbReference type="ChEBI" id="CHEBI:33019"/>
        <dbReference type="ChEBI" id="CHEBI:57464"/>
        <dbReference type="ChEBI" id="CHEBI:58017"/>
        <dbReference type="EC" id="2.4.2.22"/>
    </reaction>
    <physiologicalReaction direction="right-to-left" evidence="1">
        <dbReference type="Rhea" id="RHEA:10802"/>
    </physiologicalReaction>
</comment>
<comment type="catalytic activity">
    <reaction evidence="1">
        <text>IMP + diphosphate = hypoxanthine + 5-phospho-alpha-D-ribose 1-diphosphate</text>
        <dbReference type="Rhea" id="RHEA:17973"/>
        <dbReference type="ChEBI" id="CHEBI:17368"/>
        <dbReference type="ChEBI" id="CHEBI:33019"/>
        <dbReference type="ChEBI" id="CHEBI:58017"/>
        <dbReference type="ChEBI" id="CHEBI:58053"/>
    </reaction>
    <physiologicalReaction direction="right-to-left" evidence="1">
        <dbReference type="Rhea" id="RHEA:17975"/>
    </physiologicalReaction>
</comment>
<comment type="cofactor">
    <cofactor evidence="1">
        <name>Mg(2+)</name>
        <dbReference type="ChEBI" id="CHEBI:18420"/>
    </cofactor>
</comment>
<comment type="pathway">
    <text evidence="1">Purine metabolism; GMP biosynthesis via salvage pathway; GMP from guanine: step 1/1.</text>
</comment>
<comment type="pathway">
    <text evidence="1">Purine metabolism; XMP biosynthesis via salvage pathway; XMP from xanthine: step 1/1.</text>
</comment>
<comment type="subunit">
    <text evidence="1">Homotetramer.</text>
</comment>
<comment type="subcellular location">
    <subcellularLocation>
        <location evidence="1">Cell inner membrane</location>
        <topology evidence="1">Peripheral membrane protein</topology>
    </subcellularLocation>
</comment>
<comment type="similarity">
    <text evidence="1">Belongs to the purine/pyrimidine phosphoribosyltransferase family. XGPT subfamily.</text>
</comment>
<feature type="chain" id="PRO_0000139683" description="Xanthine-guanine phosphoribosyltransferase">
    <location>
        <begin position="1"/>
        <end position="152"/>
    </location>
</feature>
<feature type="binding site" evidence="1">
    <location>
        <begin position="37"/>
        <end position="38"/>
    </location>
    <ligand>
        <name>5-phospho-alpha-D-ribose 1-diphosphate</name>
        <dbReference type="ChEBI" id="CHEBI:58017"/>
    </ligand>
</feature>
<feature type="binding site" evidence="1">
    <location>
        <position position="69"/>
    </location>
    <ligand>
        <name>5-phospho-alpha-D-ribose 1-diphosphate</name>
        <dbReference type="ChEBI" id="CHEBI:58017"/>
    </ligand>
</feature>
<feature type="binding site" evidence="1">
    <location>
        <position position="69"/>
    </location>
    <ligand>
        <name>GMP</name>
        <dbReference type="ChEBI" id="CHEBI:58115"/>
    </ligand>
</feature>
<feature type="binding site" evidence="1">
    <location>
        <begin position="88"/>
        <end position="96"/>
    </location>
    <ligand>
        <name>5-phospho-alpha-D-ribose 1-diphosphate</name>
        <dbReference type="ChEBI" id="CHEBI:58017"/>
    </ligand>
</feature>
<feature type="binding site" evidence="1">
    <location>
        <position position="89"/>
    </location>
    <ligand>
        <name>Mg(2+)</name>
        <dbReference type="ChEBI" id="CHEBI:18420"/>
    </ligand>
</feature>
<feature type="binding site" evidence="1">
    <location>
        <begin position="92"/>
        <end position="96"/>
    </location>
    <ligand>
        <name>GMP</name>
        <dbReference type="ChEBI" id="CHEBI:58115"/>
    </ligand>
</feature>
<feature type="binding site" evidence="1">
    <location>
        <position position="92"/>
    </location>
    <ligand>
        <name>guanine</name>
        <dbReference type="ChEBI" id="CHEBI:16235"/>
    </ligand>
</feature>
<feature type="binding site" evidence="1">
    <location>
        <position position="92"/>
    </location>
    <ligand>
        <name>xanthine</name>
        <dbReference type="ChEBI" id="CHEBI:17712"/>
    </ligand>
</feature>
<feature type="binding site" evidence="1">
    <location>
        <begin position="134"/>
        <end position="135"/>
    </location>
    <ligand>
        <name>GMP</name>
        <dbReference type="ChEBI" id="CHEBI:58115"/>
    </ligand>
</feature>
<feature type="binding site" evidence="1">
    <location>
        <position position="135"/>
    </location>
    <ligand>
        <name>guanine</name>
        <dbReference type="ChEBI" id="CHEBI:16235"/>
    </ligand>
</feature>
<feature type="binding site" evidence="1">
    <location>
        <position position="135"/>
    </location>
    <ligand>
        <name>xanthine</name>
        <dbReference type="ChEBI" id="CHEBI:17712"/>
    </ligand>
</feature>
<name>XGPT_SALCH</name>
<proteinExistence type="inferred from homology"/>
<protein>
    <recommendedName>
        <fullName evidence="1">Xanthine-guanine phosphoribosyltransferase</fullName>
        <shortName evidence="1">XGPRT</shortName>
        <ecNumber evidence="1">2.4.2.-</ecNumber>
        <ecNumber evidence="1">2.4.2.22</ecNumber>
    </recommendedName>
    <alternativeName>
        <fullName evidence="1">Xanthine phosphoribosyltransferase</fullName>
    </alternativeName>
</protein>
<dbReference type="EC" id="2.4.2.-" evidence="1"/>
<dbReference type="EC" id="2.4.2.22" evidence="1"/>
<dbReference type="EMBL" id="AE017220">
    <property type="protein sequence ID" value="AAX64224.1"/>
    <property type="molecule type" value="Genomic_DNA"/>
</dbReference>
<dbReference type="RefSeq" id="WP_001292018.1">
    <property type="nucleotide sequence ID" value="NC_006905.1"/>
</dbReference>
<dbReference type="SMR" id="Q57ST7"/>
<dbReference type="GeneID" id="66754798"/>
<dbReference type="KEGG" id="sec:SCH_0318"/>
<dbReference type="HOGENOM" id="CLU_080904_3_0_6"/>
<dbReference type="UniPathway" id="UPA00602">
    <property type="reaction ID" value="UER00658"/>
</dbReference>
<dbReference type="UniPathway" id="UPA00909">
    <property type="reaction ID" value="UER00887"/>
</dbReference>
<dbReference type="Proteomes" id="UP000000538">
    <property type="component" value="Chromosome"/>
</dbReference>
<dbReference type="GO" id="GO:0005829">
    <property type="term" value="C:cytosol"/>
    <property type="evidence" value="ECO:0007669"/>
    <property type="project" value="TreeGrafter"/>
</dbReference>
<dbReference type="GO" id="GO:0005886">
    <property type="term" value="C:plasma membrane"/>
    <property type="evidence" value="ECO:0007669"/>
    <property type="project" value="UniProtKB-SubCell"/>
</dbReference>
<dbReference type="GO" id="GO:0052657">
    <property type="term" value="F:guanine phosphoribosyltransferase activity"/>
    <property type="evidence" value="ECO:0007669"/>
    <property type="project" value="RHEA"/>
</dbReference>
<dbReference type="GO" id="GO:0004422">
    <property type="term" value="F:hypoxanthine phosphoribosyltransferase activity"/>
    <property type="evidence" value="ECO:0007669"/>
    <property type="project" value="TreeGrafter"/>
</dbReference>
<dbReference type="GO" id="GO:0000287">
    <property type="term" value="F:magnesium ion binding"/>
    <property type="evidence" value="ECO:0007669"/>
    <property type="project" value="UniProtKB-UniRule"/>
</dbReference>
<dbReference type="GO" id="GO:0000310">
    <property type="term" value="F:xanthine phosphoribosyltransferase activity"/>
    <property type="evidence" value="ECO:0007669"/>
    <property type="project" value="UniProtKB-UniRule"/>
</dbReference>
<dbReference type="GO" id="GO:0032263">
    <property type="term" value="P:GMP salvage"/>
    <property type="evidence" value="ECO:0007669"/>
    <property type="project" value="UniProtKB-UniRule"/>
</dbReference>
<dbReference type="GO" id="GO:0032264">
    <property type="term" value="P:IMP salvage"/>
    <property type="evidence" value="ECO:0007669"/>
    <property type="project" value="TreeGrafter"/>
</dbReference>
<dbReference type="GO" id="GO:0006166">
    <property type="term" value="P:purine ribonucleoside salvage"/>
    <property type="evidence" value="ECO:0007669"/>
    <property type="project" value="UniProtKB-KW"/>
</dbReference>
<dbReference type="GO" id="GO:0032265">
    <property type="term" value="P:XMP salvage"/>
    <property type="evidence" value="ECO:0007669"/>
    <property type="project" value="UniProtKB-UniRule"/>
</dbReference>
<dbReference type="CDD" id="cd06223">
    <property type="entry name" value="PRTases_typeI"/>
    <property type="match status" value="1"/>
</dbReference>
<dbReference type="FunFam" id="3.40.50.2020:FF:000009">
    <property type="entry name" value="Xanthine phosphoribosyltransferase"/>
    <property type="match status" value="1"/>
</dbReference>
<dbReference type="Gene3D" id="3.40.50.2020">
    <property type="match status" value="1"/>
</dbReference>
<dbReference type="HAMAP" id="MF_01903">
    <property type="entry name" value="XGPRT"/>
    <property type="match status" value="1"/>
</dbReference>
<dbReference type="InterPro" id="IPR000836">
    <property type="entry name" value="PRibTrfase_dom"/>
</dbReference>
<dbReference type="InterPro" id="IPR029057">
    <property type="entry name" value="PRTase-like"/>
</dbReference>
<dbReference type="InterPro" id="IPR023747">
    <property type="entry name" value="Xanthine_Guanine_PRibTrfase"/>
</dbReference>
<dbReference type="NCBIfam" id="NF006613">
    <property type="entry name" value="PRK09177.1"/>
    <property type="match status" value="1"/>
</dbReference>
<dbReference type="PANTHER" id="PTHR39563">
    <property type="entry name" value="XANTHINE PHOSPHORIBOSYLTRANSFERASE"/>
    <property type="match status" value="1"/>
</dbReference>
<dbReference type="PANTHER" id="PTHR39563:SF1">
    <property type="entry name" value="XANTHINE-GUANINE PHOSPHORIBOSYLTRANSFERASE"/>
    <property type="match status" value="1"/>
</dbReference>
<dbReference type="Pfam" id="PF00156">
    <property type="entry name" value="Pribosyltran"/>
    <property type="match status" value="1"/>
</dbReference>
<dbReference type="SUPFAM" id="SSF53271">
    <property type="entry name" value="PRTase-like"/>
    <property type="match status" value="1"/>
</dbReference>
<dbReference type="PROSITE" id="PS00103">
    <property type="entry name" value="PUR_PYR_PR_TRANSFER"/>
    <property type="match status" value="1"/>
</dbReference>
<sequence>MSEKYVVTWDMLQIHARKLASRLMPSEQWKGIIAVSRGGLVPGALLARELGIRHVDTVCISSYDHDNQRELKVLKRAEGDGEGFIVIDDLVDTGGTAVAIREMYPKAHFVTIFAKPAGRPLVDDYVIDIPQNTWIEQPWDMGVVFVPPISGR</sequence>
<organism>
    <name type="scientific">Salmonella choleraesuis (strain SC-B67)</name>
    <dbReference type="NCBI Taxonomy" id="321314"/>
    <lineage>
        <taxon>Bacteria</taxon>
        <taxon>Pseudomonadati</taxon>
        <taxon>Pseudomonadota</taxon>
        <taxon>Gammaproteobacteria</taxon>
        <taxon>Enterobacterales</taxon>
        <taxon>Enterobacteriaceae</taxon>
        <taxon>Salmonella</taxon>
    </lineage>
</organism>
<keyword id="KW-0997">Cell inner membrane</keyword>
<keyword id="KW-1003">Cell membrane</keyword>
<keyword id="KW-0328">Glycosyltransferase</keyword>
<keyword id="KW-0460">Magnesium</keyword>
<keyword id="KW-0472">Membrane</keyword>
<keyword id="KW-0479">Metal-binding</keyword>
<keyword id="KW-0660">Purine salvage</keyword>
<keyword id="KW-0808">Transferase</keyword>
<accession>Q57ST7</accession>